<feature type="chain" id="PRO_0000442634" description="Flavin-dependent halogenase armH5">
    <location>
        <begin position="1"/>
        <end position="523"/>
    </location>
</feature>
<feature type="binding site" evidence="1">
    <location>
        <position position="17"/>
    </location>
    <ligand>
        <name>FAD</name>
        <dbReference type="ChEBI" id="CHEBI:57692"/>
    </ligand>
</feature>
<feature type="binding site" evidence="1">
    <location>
        <position position="20"/>
    </location>
    <ligand>
        <name>FAD</name>
        <dbReference type="ChEBI" id="CHEBI:57692"/>
    </ligand>
</feature>
<feature type="binding site" evidence="1">
    <location>
        <position position="50"/>
    </location>
    <ligand>
        <name>FAD</name>
        <dbReference type="ChEBI" id="CHEBI:57692"/>
    </ligand>
</feature>
<feature type="binding site" evidence="1">
    <location>
        <position position="328"/>
    </location>
    <ligand>
        <name>chloride</name>
        <dbReference type="ChEBI" id="CHEBI:17996"/>
    </ligand>
</feature>
<feature type="binding site" evidence="1">
    <location>
        <position position="329"/>
    </location>
    <ligand>
        <name>chloride</name>
        <dbReference type="ChEBI" id="CHEBI:17996"/>
    </ligand>
</feature>
<feature type="binding site" evidence="1">
    <location>
        <position position="330"/>
    </location>
    <ligand>
        <name>FAD</name>
        <dbReference type="ChEBI" id="CHEBI:57692"/>
    </ligand>
</feature>
<comment type="function">
    <text evidence="5">Flavin-dependent halogenase involved in the biosynthesis of melleolides, a range of antifungal and phytotoxic polyketide derivatives composed of an orsellinic acid (OA) moiety esterified to various sesquiterpene alcohols. The halogenase catalyzes the transfer of a single chlorine atom to the melleolide backbone, resulting in a 6'-chloromelleolide product. The enzyme acts on free substrate and does not depend on carrier-protein-dependent acceptor molecules.</text>
</comment>
<comment type="catalytic activity">
    <reaction evidence="5">
        <text>melleolide F + FADH2 + chloride + O2 = 6'-chloromelleolide F + FAD + 2 H2O + H(+)</text>
        <dbReference type="Rhea" id="RHEA:67160"/>
        <dbReference type="ChEBI" id="CHEBI:15377"/>
        <dbReference type="ChEBI" id="CHEBI:15378"/>
        <dbReference type="ChEBI" id="CHEBI:15379"/>
        <dbReference type="ChEBI" id="CHEBI:17996"/>
        <dbReference type="ChEBI" id="CHEBI:57692"/>
        <dbReference type="ChEBI" id="CHEBI:58307"/>
        <dbReference type="ChEBI" id="CHEBI:167712"/>
        <dbReference type="ChEBI" id="CHEBI:167713"/>
    </reaction>
    <physiologicalReaction direction="left-to-right" evidence="5">
        <dbReference type="Rhea" id="RHEA:67161"/>
    </physiologicalReaction>
</comment>
<comment type="biotechnology">
    <text evidence="2 3 4 6 7 8">Melleolide sesquiterpene aryl esters are cytotoxic secondary products with anti-cancer potential (PubMed:21376582, PubMed:26952552). Armillaridin shows therapeutic and radiosensitizing effects on human esophageal cancer cells (PubMed:23864890). Armillaridin induces autophagy-associated cell death in human chronic myelogenous leukemia as well as of hepatocellular carcinoma cells (PubMed:27592257, PubMed:31488037). Armillaridin can also inhibit the differentiation and activation of human macrophages and thus might have potential to be developed as a biological response modifier for inflammatory diseases (PubMed:25746621).</text>
</comment>
<comment type="miscellaneous">
    <text evidence="9 12">Armillaria species are both devastating forest pathogens and some of the largest and oldest terrestrial organisms on Earth (Probable) (PubMed:31746694). They forage for hosts and achieve immense colony sizes via rhizomorphs, root-like multicellular structures of clonal dispersal (Probable).</text>
</comment>
<comment type="similarity">
    <text evidence="11">Belongs to the flavin-dependent halogenase family.</text>
</comment>
<gene>
    <name evidence="10" type="primary">armH5</name>
</gene>
<accession>A0A0U3C228</accession>
<reference key="1">
    <citation type="journal article" date="2015" name="Appl. Environ. Microbiol.">
        <title>A fivefold parallelized biosynthetic process secures chlorination of Armillaria mellea (honey mushroom) toxins.</title>
        <authorList>
            <person name="Wick J."/>
            <person name="Heine D."/>
            <person name="Lackner G."/>
            <person name="Misiek M."/>
            <person name="Tauber J."/>
            <person name="Jagusch H."/>
            <person name="Hertweck C."/>
            <person name="Hoffmeister D."/>
        </authorList>
    </citation>
    <scope>NUCLEOTIDE SEQUENCE [MRNA]</scope>
    <scope>FUNCTION</scope>
    <scope>CATALYTIC ACTIVITY</scope>
    <source>
        <strain>DSM 3731</strain>
    </source>
</reference>
<reference key="2">
    <citation type="journal article" date="2011" name="Bioorg. Med. Chem. Lett.">
        <title>In vitro cytotoxicity of melleolide antibiotics: structural and mechanistic aspects.</title>
        <authorList>
            <person name="Bohnert M."/>
            <person name="Miethbauer S."/>
            <person name="Dahse H.M."/>
            <person name="Ziemen J."/>
            <person name="Nett M."/>
            <person name="Hoffmeister D."/>
        </authorList>
    </citation>
    <scope>BIOTECHNOLOGY</scope>
</reference>
<reference key="3">
    <citation type="journal article" date="2013" name="Evid. Based Complement Alternat. Med.">
        <title>Therapeutic and radiosensitizing effects of armillaridin on human esophageal cancer cells.</title>
        <authorList>
            <person name="Chi C.W."/>
            <person name="Chen C.C."/>
            <person name="Chen Y.J."/>
        </authorList>
    </citation>
    <scope>BIOTECHNOLOGY</scope>
</reference>
<reference key="4">
    <citation type="journal article" date="2015" name="Int. J. Med. Mushrooms">
        <title>Armillaridin, a honey medicinal mushroom, Armillaria mellea (higher basidiomycetes) component, inhibits differentiation and activation of human macrophages.</title>
        <authorList>
            <person name="Liu T.P."/>
            <person name="Chen C.C."/>
            <person name="Shiao P.Y."/>
            <person name="Shieh H.R."/>
            <person name="Chen Y.Y."/>
            <person name="Chen Y.J."/>
        </authorList>
    </citation>
    <scope>BIOTECHNOLOGY</scope>
</reference>
<reference key="5">
    <citation type="journal article" date="2016" name="J. Ethnopharmacol.">
        <title>Structure, cytotoxic activity and mechanism of protoilludane sesquiterpene aryl esters from the mycelium of Armillaria mellea.</title>
        <authorList>
            <person name="Li Z."/>
            <person name="Wang Y."/>
            <person name="Jiang B."/>
            <person name="Li W."/>
            <person name="Zheng L."/>
            <person name="Yang X."/>
            <person name="Bao Y."/>
            <person name="Sun L."/>
            <person name="Huang Y."/>
            <person name="Li Y."/>
        </authorList>
    </citation>
    <scope>BIOTECHNOLOGY</scope>
</reference>
<reference key="6">
    <citation type="journal article" date="2016" name="Tumor Biol.">
        <title>Armillaridin induces autophagy-associated cell death in human chronic myelogenous leukemia K562 cells.</title>
        <authorList>
            <person name="Chang W.H."/>
            <person name="Huang H.L."/>
            <person name="Huang W.P."/>
            <person name="Chen C.C."/>
            <person name="Chen Y.J."/>
        </authorList>
    </citation>
    <scope>BIOTECHNOLOGY</scope>
</reference>
<reference key="7">
    <citation type="journal article" date="2018" name="Curr. Biol.">
        <title>Armillaria.</title>
        <authorList>
            <person name="Sipos G."/>
            <person name="Anderson J.B."/>
            <person name="Nagy L.G."/>
        </authorList>
    </citation>
    <scope>MISCELLANEOUS</scope>
</reference>
<reference key="8">
    <citation type="journal article" date="2019" name="Am. J. Chin. Med.">
        <title>Induction of autophagic death of human hepatocellular carcinoma cells by armillaridin from Armillaria mellea.</title>
        <authorList>
            <person name="Leu Y.S."/>
            <person name="Chen Y.J."/>
            <person name="Chen C.C."/>
            <person name="Huang H.L."/>
        </authorList>
    </citation>
    <scope>BIOTECHNOLOGY</scope>
</reference>
<reference key="9">
    <citation type="journal article" date="2020" name="Plant Dis.">
        <title>Susceptibility of garden trees and shrubs to Armillaria root rot.</title>
        <authorList>
            <person name="Cromey M.G."/>
            <person name="Drakulic J."/>
            <person name="Beal E.J."/>
            <person name="Waghorn I.A.G."/>
            <person name="Perry J.N."/>
            <person name="Clover G.R.G."/>
        </authorList>
    </citation>
    <scope>MISCELLANEOUS</scope>
</reference>
<dbReference type="EC" id="1.14.19.-" evidence="5"/>
<dbReference type="EMBL" id="KT819181">
    <property type="protein sequence ID" value="ALT31852.1"/>
    <property type="molecule type" value="mRNA"/>
</dbReference>
<dbReference type="SMR" id="A0A0U3C228"/>
<dbReference type="GO" id="GO:0071949">
    <property type="term" value="F:FAD binding"/>
    <property type="evidence" value="ECO:0007669"/>
    <property type="project" value="InterPro"/>
</dbReference>
<dbReference type="GO" id="GO:0140907">
    <property type="term" value="F:flavin-dependent halogenase activity"/>
    <property type="evidence" value="ECO:0000314"/>
    <property type="project" value="GO_Central"/>
</dbReference>
<dbReference type="GO" id="GO:0004497">
    <property type="term" value="F:monooxygenase activity"/>
    <property type="evidence" value="ECO:0007669"/>
    <property type="project" value="UniProtKB-KW"/>
</dbReference>
<dbReference type="GO" id="GO:0044550">
    <property type="term" value="P:secondary metabolite biosynthetic process"/>
    <property type="evidence" value="ECO:0000314"/>
    <property type="project" value="GO_Central"/>
</dbReference>
<dbReference type="Gene3D" id="3.50.50.60">
    <property type="entry name" value="FAD/NAD(P)-binding domain"/>
    <property type="match status" value="1"/>
</dbReference>
<dbReference type="InterPro" id="IPR002938">
    <property type="entry name" value="FAD-bd"/>
</dbReference>
<dbReference type="InterPro" id="IPR036188">
    <property type="entry name" value="FAD/NAD-bd_sf"/>
</dbReference>
<dbReference type="InterPro" id="IPR050816">
    <property type="entry name" value="Flavin-dep_Halogenase_NPB"/>
</dbReference>
<dbReference type="PANTHER" id="PTHR43747:SF5">
    <property type="entry name" value="FAD-BINDING DOMAIN-CONTAINING PROTEIN"/>
    <property type="match status" value="1"/>
</dbReference>
<dbReference type="PANTHER" id="PTHR43747">
    <property type="entry name" value="FAD-BINDING PROTEIN"/>
    <property type="match status" value="1"/>
</dbReference>
<dbReference type="Pfam" id="PF01494">
    <property type="entry name" value="FAD_binding_3"/>
    <property type="match status" value="1"/>
</dbReference>
<dbReference type="PRINTS" id="PR00420">
    <property type="entry name" value="RNGMNOXGNASE"/>
</dbReference>
<dbReference type="SUPFAM" id="SSF51905">
    <property type="entry name" value="FAD/NAD(P)-binding domain"/>
    <property type="match status" value="1"/>
</dbReference>
<sequence>MPSEYVPEATTVLVIGGGPAGSYASTLLAREGIDVVLLEAVKHPREHVGESMLPSMRHYLRFIDLESEYDARKFMHKPGAAFKFVHGQRECYTDFKILGPDRTTWNVFRAEADELMLRHAASQGVKIFEETRVESITFSESVDNSVSPESRPIAASWKNKSGQVGKISFNWLIDASGRQGIMSTKYMKNRIYREGLRNVAAYGYWKDVTVFEEGGPRSNAPWFECLTDREGWAWLIPLHNGTTSIGVVMHQDTSNRKKAEGPSGLEQHYLSQLKLAPGVQDLIGSKGSYVPGSVKSTADYSYHATEYSGDHYRIIGDAAAFVDPLFSSGVHVAMTGALSAASTILGSMKGQVTEVEAQAWHDAKIGICQTRFLLVVLSAYRQMQHVGNKALLDDVNASNFDAAFSLFRPIYQGEHDTSTSLTNEELSKMIEFTRNLFTPTTHQQYNEVKQRVGDLIALSGPVMPSDELDKVLDSDDSDAKAVLKRINSLKVLRNDTSPESFTSEAVNGYVVNLERGQLGLVRA</sequence>
<name>ARMH5_ARMME</name>
<keyword id="KW-0274">FAD</keyword>
<keyword id="KW-0285">Flavoprotein</keyword>
<keyword id="KW-0503">Monooxygenase</keyword>
<keyword id="KW-0560">Oxidoreductase</keyword>
<protein>
    <recommendedName>
        <fullName evidence="10">Flavin-dependent halogenase armH5</fullName>
        <ecNumber evidence="5">1.14.19.-</ecNumber>
    </recommendedName>
</protein>
<evidence type="ECO:0000250" key="1">
    <source>
        <dbReference type="UniProtKB" id="P95480"/>
    </source>
</evidence>
<evidence type="ECO:0000269" key="2">
    <source>
    </source>
</evidence>
<evidence type="ECO:0000269" key="3">
    <source>
    </source>
</evidence>
<evidence type="ECO:0000269" key="4">
    <source>
    </source>
</evidence>
<evidence type="ECO:0000269" key="5">
    <source>
    </source>
</evidence>
<evidence type="ECO:0000269" key="6">
    <source>
    </source>
</evidence>
<evidence type="ECO:0000269" key="7">
    <source>
    </source>
</evidence>
<evidence type="ECO:0000269" key="8">
    <source>
    </source>
</evidence>
<evidence type="ECO:0000269" key="9">
    <source>
    </source>
</evidence>
<evidence type="ECO:0000303" key="10">
    <source>
    </source>
</evidence>
<evidence type="ECO:0000305" key="11"/>
<evidence type="ECO:0000305" key="12">
    <source>
    </source>
</evidence>
<proteinExistence type="evidence at protein level"/>
<organism>
    <name type="scientific">Armillaria mellea</name>
    <name type="common">Honey mushroom</name>
    <name type="synonym">Agaricus melleus</name>
    <dbReference type="NCBI Taxonomy" id="47429"/>
    <lineage>
        <taxon>Eukaryota</taxon>
        <taxon>Fungi</taxon>
        <taxon>Dikarya</taxon>
        <taxon>Basidiomycota</taxon>
        <taxon>Agaricomycotina</taxon>
        <taxon>Agaricomycetes</taxon>
        <taxon>Agaricomycetidae</taxon>
        <taxon>Agaricales</taxon>
        <taxon>Marasmiineae</taxon>
        <taxon>Physalacriaceae</taxon>
        <taxon>Armillaria</taxon>
    </lineage>
</organism>